<accession>A2C5Q6</accession>
<name>RL20_PROM3</name>
<proteinExistence type="inferred from homology"/>
<reference key="1">
    <citation type="journal article" date="2007" name="PLoS Genet.">
        <title>Patterns and implications of gene gain and loss in the evolution of Prochlorococcus.</title>
        <authorList>
            <person name="Kettler G.C."/>
            <person name="Martiny A.C."/>
            <person name="Huang K."/>
            <person name="Zucker J."/>
            <person name="Coleman M.L."/>
            <person name="Rodrigue S."/>
            <person name="Chen F."/>
            <person name="Lapidus A."/>
            <person name="Ferriera S."/>
            <person name="Johnson J."/>
            <person name="Steglich C."/>
            <person name="Church G.M."/>
            <person name="Richardson P."/>
            <person name="Chisholm S.W."/>
        </authorList>
    </citation>
    <scope>NUCLEOTIDE SEQUENCE [LARGE SCALE GENOMIC DNA]</scope>
    <source>
        <strain>MIT 9303</strain>
    </source>
</reference>
<comment type="function">
    <text evidence="1">Binds directly to 23S ribosomal RNA and is necessary for the in vitro assembly process of the 50S ribosomal subunit. It is not involved in the protein synthesizing functions of that subunit.</text>
</comment>
<comment type="similarity">
    <text evidence="1">Belongs to the bacterial ribosomal protein bL20 family.</text>
</comment>
<keyword id="KW-0687">Ribonucleoprotein</keyword>
<keyword id="KW-0689">Ribosomal protein</keyword>
<keyword id="KW-0694">RNA-binding</keyword>
<keyword id="KW-0699">rRNA-binding</keyword>
<feature type="chain" id="PRO_1000049034" description="Large ribosomal subunit protein bL20">
    <location>
        <begin position="1"/>
        <end position="115"/>
    </location>
</feature>
<gene>
    <name evidence="1" type="primary">rplT</name>
    <name evidence="1" type="synonym">rpl20</name>
    <name type="ordered locus">P9303_00591</name>
</gene>
<sequence>MARVKRGNVARKRRNKILRLARGFQGSNGSLFRTANQRVMKALCNAYRDRRRRKRDFRRLWIARINAAARINGVSYSRLIGDLKKADVRINRKMLAQLAVMDPKSFTSVVTSAKS</sequence>
<organism>
    <name type="scientific">Prochlorococcus marinus (strain MIT 9303)</name>
    <dbReference type="NCBI Taxonomy" id="59922"/>
    <lineage>
        <taxon>Bacteria</taxon>
        <taxon>Bacillati</taxon>
        <taxon>Cyanobacteriota</taxon>
        <taxon>Cyanophyceae</taxon>
        <taxon>Synechococcales</taxon>
        <taxon>Prochlorococcaceae</taxon>
        <taxon>Prochlorococcus</taxon>
    </lineage>
</organism>
<dbReference type="EMBL" id="CP000554">
    <property type="protein sequence ID" value="ABM76816.1"/>
    <property type="molecule type" value="Genomic_DNA"/>
</dbReference>
<dbReference type="RefSeq" id="WP_011824749.1">
    <property type="nucleotide sequence ID" value="NC_008820.1"/>
</dbReference>
<dbReference type="SMR" id="A2C5Q6"/>
<dbReference type="STRING" id="59922.P9303_00591"/>
<dbReference type="KEGG" id="pmf:P9303_00591"/>
<dbReference type="HOGENOM" id="CLU_123265_0_1_3"/>
<dbReference type="BioCyc" id="PMAR59922:G1G80-59-MONOMER"/>
<dbReference type="Proteomes" id="UP000002274">
    <property type="component" value="Chromosome"/>
</dbReference>
<dbReference type="GO" id="GO:1990904">
    <property type="term" value="C:ribonucleoprotein complex"/>
    <property type="evidence" value="ECO:0007669"/>
    <property type="project" value="UniProtKB-KW"/>
</dbReference>
<dbReference type="GO" id="GO:0005840">
    <property type="term" value="C:ribosome"/>
    <property type="evidence" value="ECO:0007669"/>
    <property type="project" value="UniProtKB-KW"/>
</dbReference>
<dbReference type="GO" id="GO:0019843">
    <property type="term" value="F:rRNA binding"/>
    <property type="evidence" value="ECO:0007669"/>
    <property type="project" value="UniProtKB-UniRule"/>
</dbReference>
<dbReference type="GO" id="GO:0003735">
    <property type="term" value="F:structural constituent of ribosome"/>
    <property type="evidence" value="ECO:0007669"/>
    <property type="project" value="InterPro"/>
</dbReference>
<dbReference type="GO" id="GO:0000027">
    <property type="term" value="P:ribosomal large subunit assembly"/>
    <property type="evidence" value="ECO:0007669"/>
    <property type="project" value="UniProtKB-UniRule"/>
</dbReference>
<dbReference type="GO" id="GO:0006412">
    <property type="term" value="P:translation"/>
    <property type="evidence" value="ECO:0007669"/>
    <property type="project" value="InterPro"/>
</dbReference>
<dbReference type="CDD" id="cd07026">
    <property type="entry name" value="Ribosomal_L20"/>
    <property type="match status" value="1"/>
</dbReference>
<dbReference type="FunFam" id="1.10.1900.20:FF:000001">
    <property type="entry name" value="50S ribosomal protein L20"/>
    <property type="match status" value="1"/>
</dbReference>
<dbReference type="Gene3D" id="6.10.160.10">
    <property type="match status" value="1"/>
</dbReference>
<dbReference type="Gene3D" id="1.10.1900.20">
    <property type="entry name" value="Ribosomal protein L20"/>
    <property type="match status" value="1"/>
</dbReference>
<dbReference type="HAMAP" id="MF_00382">
    <property type="entry name" value="Ribosomal_bL20"/>
    <property type="match status" value="1"/>
</dbReference>
<dbReference type="InterPro" id="IPR005813">
    <property type="entry name" value="Ribosomal_bL20"/>
</dbReference>
<dbReference type="InterPro" id="IPR049946">
    <property type="entry name" value="RIBOSOMAL_L20_CS"/>
</dbReference>
<dbReference type="InterPro" id="IPR035566">
    <property type="entry name" value="Ribosomal_protein_bL20_C"/>
</dbReference>
<dbReference type="NCBIfam" id="TIGR01032">
    <property type="entry name" value="rplT_bact"/>
    <property type="match status" value="1"/>
</dbReference>
<dbReference type="PANTHER" id="PTHR10986">
    <property type="entry name" value="39S RIBOSOMAL PROTEIN L20"/>
    <property type="match status" value="1"/>
</dbReference>
<dbReference type="Pfam" id="PF00453">
    <property type="entry name" value="Ribosomal_L20"/>
    <property type="match status" value="1"/>
</dbReference>
<dbReference type="PRINTS" id="PR00062">
    <property type="entry name" value="RIBOSOMALL20"/>
</dbReference>
<dbReference type="SUPFAM" id="SSF74731">
    <property type="entry name" value="Ribosomal protein L20"/>
    <property type="match status" value="1"/>
</dbReference>
<dbReference type="PROSITE" id="PS00937">
    <property type="entry name" value="RIBOSOMAL_L20"/>
    <property type="match status" value="1"/>
</dbReference>
<protein>
    <recommendedName>
        <fullName evidence="1">Large ribosomal subunit protein bL20</fullName>
    </recommendedName>
    <alternativeName>
        <fullName evidence="2">50S ribosomal protein L20</fullName>
    </alternativeName>
</protein>
<evidence type="ECO:0000255" key="1">
    <source>
        <dbReference type="HAMAP-Rule" id="MF_00382"/>
    </source>
</evidence>
<evidence type="ECO:0000305" key="2"/>